<keyword id="KW-0963">Cytoplasm</keyword>
<keyword id="KW-0413">Isomerase</keyword>
<keyword id="KW-1185">Reference proteome</keyword>
<keyword id="KW-0697">Rotamase</keyword>
<accession>Q6CKF0</accession>
<organism>
    <name type="scientific">Kluyveromyces lactis (strain ATCC 8585 / CBS 2359 / DSM 70799 / NBRC 1267 / NRRL Y-1140 / WM37)</name>
    <name type="common">Yeast</name>
    <name type="synonym">Candida sphaerica</name>
    <dbReference type="NCBI Taxonomy" id="284590"/>
    <lineage>
        <taxon>Eukaryota</taxon>
        <taxon>Fungi</taxon>
        <taxon>Dikarya</taxon>
        <taxon>Ascomycota</taxon>
        <taxon>Saccharomycotina</taxon>
        <taxon>Saccharomycetes</taxon>
        <taxon>Saccharomycetales</taxon>
        <taxon>Saccharomycetaceae</taxon>
        <taxon>Kluyveromyces</taxon>
    </lineage>
</organism>
<reference key="1">
    <citation type="journal article" date="2004" name="Nature">
        <title>Genome evolution in yeasts.</title>
        <authorList>
            <person name="Dujon B."/>
            <person name="Sherman D."/>
            <person name="Fischer G."/>
            <person name="Durrens P."/>
            <person name="Casaregola S."/>
            <person name="Lafontaine I."/>
            <person name="de Montigny J."/>
            <person name="Marck C."/>
            <person name="Neuveglise C."/>
            <person name="Talla E."/>
            <person name="Goffard N."/>
            <person name="Frangeul L."/>
            <person name="Aigle M."/>
            <person name="Anthouard V."/>
            <person name="Babour A."/>
            <person name="Barbe V."/>
            <person name="Barnay S."/>
            <person name="Blanchin S."/>
            <person name="Beckerich J.-M."/>
            <person name="Beyne E."/>
            <person name="Bleykasten C."/>
            <person name="Boisrame A."/>
            <person name="Boyer J."/>
            <person name="Cattolico L."/>
            <person name="Confanioleri F."/>
            <person name="de Daruvar A."/>
            <person name="Despons L."/>
            <person name="Fabre E."/>
            <person name="Fairhead C."/>
            <person name="Ferry-Dumazet H."/>
            <person name="Groppi A."/>
            <person name="Hantraye F."/>
            <person name="Hennequin C."/>
            <person name="Jauniaux N."/>
            <person name="Joyet P."/>
            <person name="Kachouri R."/>
            <person name="Kerrest A."/>
            <person name="Koszul R."/>
            <person name="Lemaire M."/>
            <person name="Lesur I."/>
            <person name="Ma L."/>
            <person name="Muller H."/>
            <person name="Nicaud J.-M."/>
            <person name="Nikolski M."/>
            <person name="Oztas S."/>
            <person name="Ozier-Kalogeropoulos O."/>
            <person name="Pellenz S."/>
            <person name="Potier S."/>
            <person name="Richard G.-F."/>
            <person name="Straub M.-L."/>
            <person name="Suleau A."/>
            <person name="Swennen D."/>
            <person name="Tekaia F."/>
            <person name="Wesolowski-Louvel M."/>
            <person name="Westhof E."/>
            <person name="Wirth B."/>
            <person name="Zeniou-Meyer M."/>
            <person name="Zivanovic Y."/>
            <person name="Bolotin-Fukuhara M."/>
            <person name="Thierry A."/>
            <person name="Bouchier C."/>
            <person name="Caudron B."/>
            <person name="Scarpelli C."/>
            <person name="Gaillardin C."/>
            <person name="Weissenbach J."/>
            <person name="Wincker P."/>
            <person name="Souciet J.-L."/>
        </authorList>
    </citation>
    <scope>NUCLEOTIDE SEQUENCE [LARGE SCALE GENOMIC DNA]</scope>
    <source>
        <strain>ATCC 8585 / CBS 2359 / DSM 70799 / NBRC 1267 / NRRL Y-1140 / WM37</strain>
    </source>
</reference>
<comment type="function">
    <text evidence="1">PPIases accelerate the folding of proteins. It catalyzes the cis-trans isomerization of proline imidic peptide bonds in oligopeptides. Acts as a regulatory subunit for PP2A-like phosphatases modulating their activity or substrate specificity, probably by inducing a conformational change in the catalytic subunit, a direct target of the PPIase. Can reactivate inactive phosphatase PP2A-phosphatase methylesterase complexes (PP2Ai) in presence of ATP and Mg(2+) by dissociating the inactive form from the complex (By similarity).</text>
</comment>
<comment type="catalytic activity">
    <reaction>
        <text>[protein]-peptidylproline (omega=180) = [protein]-peptidylproline (omega=0)</text>
        <dbReference type="Rhea" id="RHEA:16237"/>
        <dbReference type="Rhea" id="RHEA-COMP:10747"/>
        <dbReference type="Rhea" id="RHEA-COMP:10748"/>
        <dbReference type="ChEBI" id="CHEBI:83833"/>
        <dbReference type="ChEBI" id="CHEBI:83834"/>
        <dbReference type="EC" id="5.2.1.8"/>
    </reaction>
</comment>
<comment type="subcellular location">
    <subcellularLocation>
        <location evidence="1">Cytoplasm</location>
    </subcellularLocation>
</comment>
<comment type="similarity">
    <text evidence="2">Belongs to the PTPA-type PPIase family.</text>
</comment>
<protein>
    <recommendedName>
        <fullName>Serine/threonine-protein phosphatase 2A activator 2</fullName>
        <ecNumber>5.2.1.8</ecNumber>
    </recommendedName>
    <alternativeName>
        <fullName>Peptidyl-prolyl cis-trans isomerase PTPA-2</fullName>
        <shortName>PPIase PTPA-2</shortName>
        <shortName>Rotamase PTPA-2</shortName>
    </alternativeName>
    <alternativeName>
        <fullName>Phosphotyrosyl phosphatase activator 2</fullName>
    </alternativeName>
</protein>
<gene>
    <name type="primary">RRD2</name>
    <name type="ordered locus">KLLA0F11187g</name>
</gene>
<name>PTPA2_KLULA</name>
<feature type="chain" id="PRO_0000226115" description="Serine/threonine-protein phosphatase 2A activator 2">
    <location>
        <begin position="1"/>
        <end position="360"/>
    </location>
</feature>
<proteinExistence type="inferred from homology"/>
<dbReference type="EC" id="5.2.1.8"/>
<dbReference type="EMBL" id="CR382126">
    <property type="protein sequence ID" value="CAG98297.1"/>
    <property type="molecule type" value="Genomic_DNA"/>
</dbReference>
<dbReference type="RefSeq" id="XP_455589.1">
    <property type="nucleotide sequence ID" value="XM_455589.1"/>
</dbReference>
<dbReference type="SMR" id="Q6CKF0"/>
<dbReference type="FunCoup" id="Q6CKF0">
    <property type="interactions" value="555"/>
</dbReference>
<dbReference type="STRING" id="284590.Q6CKF0"/>
<dbReference type="PaxDb" id="284590-Q6CKF0"/>
<dbReference type="KEGG" id="kla:KLLA0_F11187g"/>
<dbReference type="eggNOG" id="KOG2867">
    <property type="taxonomic scope" value="Eukaryota"/>
</dbReference>
<dbReference type="HOGENOM" id="CLU_030733_0_0_1"/>
<dbReference type="InParanoid" id="Q6CKF0"/>
<dbReference type="OMA" id="YLWGAAQ"/>
<dbReference type="Proteomes" id="UP000000598">
    <property type="component" value="Chromosome F"/>
</dbReference>
<dbReference type="GO" id="GO:0005737">
    <property type="term" value="C:cytoplasm"/>
    <property type="evidence" value="ECO:0007669"/>
    <property type="project" value="UniProtKB-SubCell"/>
</dbReference>
<dbReference type="GO" id="GO:0005634">
    <property type="term" value="C:nucleus"/>
    <property type="evidence" value="ECO:0007669"/>
    <property type="project" value="TreeGrafter"/>
</dbReference>
<dbReference type="GO" id="GO:0000159">
    <property type="term" value="C:protein phosphatase type 2A complex"/>
    <property type="evidence" value="ECO:0007669"/>
    <property type="project" value="TreeGrafter"/>
</dbReference>
<dbReference type="GO" id="GO:0003755">
    <property type="term" value="F:peptidyl-prolyl cis-trans isomerase activity"/>
    <property type="evidence" value="ECO:0007669"/>
    <property type="project" value="UniProtKB-KW"/>
</dbReference>
<dbReference type="GO" id="GO:0008160">
    <property type="term" value="F:protein tyrosine phosphatase activator activity"/>
    <property type="evidence" value="ECO:0007669"/>
    <property type="project" value="TreeGrafter"/>
</dbReference>
<dbReference type="GO" id="GO:0007052">
    <property type="term" value="P:mitotic spindle organization"/>
    <property type="evidence" value="ECO:0007669"/>
    <property type="project" value="TreeGrafter"/>
</dbReference>
<dbReference type="CDD" id="cd04087">
    <property type="entry name" value="PTPA"/>
    <property type="match status" value="1"/>
</dbReference>
<dbReference type="FunFam" id="1.20.120.1150:FF:000002">
    <property type="entry name" value="Serine/threonine-protein phosphatase 2A activator"/>
    <property type="match status" value="1"/>
</dbReference>
<dbReference type="Gene3D" id="1.20.120.1150">
    <property type="match status" value="1"/>
</dbReference>
<dbReference type="InterPro" id="IPR004327">
    <property type="entry name" value="Phstyr_phstse_ac"/>
</dbReference>
<dbReference type="InterPro" id="IPR043170">
    <property type="entry name" value="PTPA_C_lid"/>
</dbReference>
<dbReference type="InterPro" id="IPR037218">
    <property type="entry name" value="PTPA_sf"/>
</dbReference>
<dbReference type="PANTHER" id="PTHR10012">
    <property type="entry name" value="SERINE/THREONINE-PROTEIN PHOSPHATASE 2A REGULATORY SUBUNIT B"/>
    <property type="match status" value="1"/>
</dbReference>
<dbReference type="PANTHER" id="PTHR10012:SF5">
    <property type="entry name" value="SERINE_THREONINE-PROTEIN PHOSPHATASE 2A ACTIVATOR 2"/>
    <property type="match status" value="1"/>
</dbReference>
<dbReference type="Pfam" id="PF03095">
    <property type="entry name" value="PTPA"/>
    <property type="match status" value="1"/>
</dbReference>
<dbReference type="PIRSF" id="PIRSF016325">
    <property type="entry name" value="Phstyr_phstse_ac"/>
    <property type="match status" value="1"/>
</dbReference>
<dbReference type="SUPFAM" id="SSF140984">
    <property type="entry name" value="PTPA-like"/>
    <property type="match status" value="1"/>
</dbReference>
<evidence type="ECO:0000250" key="1"/>
<evidence type="ECO:0000305" key="2"/>
<sequence>MAIKRLINEHDMELWNNSKTFEDVIGFINTLALSVRGRENNDYTQPISDNVQRVSNLLSKVTEIIGKHEVIKDANTSRFGKIEFRDFYDDISEHSNELISKIFEGIEKPDTGKLDDICTYFINSWGDRSRIDYGSGHELNFICFLYCLTESKVFDLENDSSNIVLMLFIKYLGIMRSLELKYWLEPAGSHGVWGLDDYHFLPFLFGAFQLSTHKHLKPKSIHNPEVVEMFQDRYLYFGCIAFINKVKTTASLRWHSPMLDDISGVKRWSKVAEGMVKMYKAEVLQKLPIMQHFYFGYFLKCPEGVSEPSARAQDHHEDDSCCTDGSHGHSTWADCCGIAVPSAIAASQMANKDVRLFPFD</sequence>